<protein>
    <recommendedName>
        <fullName evidence="1">Small ribosomal subunit protein uS4</fullName>
    </recommendedName>
    <alternativeName>
        <fullName evidence="3">30S ribosomal protein S4</fullName>
    </alternativeName>
</protein>
<comment type="function">
    <text evidence="1">One of the primary rRNA binding proteins, it binds directly to 16S rRNA where it nucleates assembly of the body of the 30S subunit.</text>
</comment>
<comment type="function">
    <text evidence="1">With S5 and S12 plays an important role in translational accuracy.</text>
</comment>
<comment type="subunit">
    <text evidence="1">Part of the 30S ribosomal subunit. Contacts protein S5. The interaction surface between S4 and S5 is involved in control of translational fidelity.</text>
</comment>
<comment type="similarity">
    <text evidence="1">Belongs to the universal ribosomal protein uS4 family.</text>
</comment>
<dbReference type="EMBL" id="CP001635">
    <property type="protein sequence ID" value="ACS21648.1"/>
    <property type="molecule type" value="Genomic_DNA"/>
</dbReference>
<dbReference type="SMR" id="C5CQ76"/>
<dbReference type="STRING" id="543728.Vapar_5046"/>
<dbReference type="KEGG" id="vap:Vapar_5046"/>
<dbReference type="eggNOG" id="COG0522">
    <property type="taxonomic scope" value="Bacteria"/>
</dbReference>
<dbReference type="HOGENOM" id="CLU_092403_0_2_4"/>
<dbReference type="OrthoDB" id="9803672at2"/>
<dbReference type="GO" id="GO:0015935">
    <property type="term" value="C:small ribosomal subunit"/>
    <property type="evidence" value="ECO:0007669"/>
    <property type="project" value="InterPro"/>
</dbReference>
<dbReference type="GO" id="GO:0019843">
    <property type="term" value="F:rRNA binding"/>
    <property type="evidence" value="ECO:0007669"/>
    <property type="project" value="UniProtKB-UniRule"/>
</dbReference>
<dbReference type="GO" id="GO:0003735">
    <property type="term" value="F:structural constituent of ribosome"/>
    <property type="evidence" value="ECO:0007669"/>
    <property type="project" value="InterPro"/>
</dbReference>
<dbReference type="GO" id="GO:0042274">
    <property type="term" value="P:ribosomal small subunit biogenesis"/>
    <property type="evidence" value="ECO:0007669"/>
    <property type="project" value="TreeGrafter"/>
</dbReference>
<dbReference type="GO" id="GO:0006412">
    <property type="term" value="P:translation"/>
    <property type="evidence" value="ECO:0007669"/>
    <property type="project" value="UniProtKB-UniRule"/>
</dbReference>
<dbReference type="CDD" id="cd00165">
    <property type="entry name" value="S4"/>
    <property type="match status" value="1"/>
</dbReference>
<dbReference type="FunFam" id="1.10.1050.10:FF:000001">
    <property type="entry name" value="30S ribosomal protein S4"/>
    <property type="match status" value="1"/>
</dbReference>
<dbReference type="FunFam" id="3.10.290.10:FF:000001">
    <property type="entry name" value="30S ribosomal protein S4"/>
    <property type="match status" value="1"/>
</dbReference>
<dbReference type="Gene3D" id="1.10.1050.10">
    <property type="entry name" value="Ribosomal Protein S4 Delta 41, Chain A, domain 1"/>
    <property type="match status" value="1"/>
</dbReference>
<dbReference type="Gene3D" id="3.10.290.10">
    <property type="entry name" value="RNA-binding S4 domain"/>
    <property type="match status" value="1"/>
</dbReference>
<dbReference type="HAMAP" id="MF_01306_B">
    <property type="entry name" value="Ribosomal_uS4_B"/>
    <property type="match status" value="1"/>
</dbReference>
<dbReference type="InterPro" id="IPR022801">
    <property type="entry name" value="Ribosomal_uS4"/>
</dbReference>
<dbReference type="InterPro" id="IPR005709">
    <property type="entry name" value="Ribosomal_uS4_bac-type"/>
</dbReference>
<dbReference type="InterPro" id="IPR018079">
    <property type="entry name" value="Ribosomal_uS4_CS"/>
</dbReference>
<dbReference type="InterPro" id="IPR001912">
    <property type="entry name" value="Ribosomal_uS4_N"/>
</dbReference>
<dbReference type="InterPro" id="IPR002942">
    <property type="entry name" value="S4_RNA-bd"/>
</dbReference>
<dbReference type="InterPro" id="IPR036986">
    <property type="entry name" value="S4_RNA-bd_sf"/>
</dbReference>
<dbReference type="NCBIfam" id="NF003717">
    <property type="entry name" value="PRK05327.1"/>
    <property type="match status" value="1"/>
</dbReference>
<dbReference type="NCBIfam" id="TIGR01017">
    <property type="entry name" value="rpsD_bact"/>
    <property type="match status" value="1"/>
</dbReference>
<dbReference type="PANTHER" id="PTHR11831">
    <property type="entry name" value="30S 40S RIBOSOMAL PROTEIN"/>
    <property type="match status" value="1"/>
</dbReference>
<dbReference type="PANTHER" id="PTHR11831:SF4">
    <property type="entry name" value="SMALL RIBOSOMAL SUBUNIT PROTEIN US4M"/>
    <property type="match status" value="1"/>
</dbReference>
<dbReference type="Pfam" id="PF00163">
    <property type="entry name" value="Ribosomal_S4"/>
    <property type="match status" value="1"/>
</dbReference>
<dbReference type="Pfam" id="PF01479">
    <property type="entry name" value="S4"/>
    <property type="match status" value="1"/>
</dbReference>
<dbReference type="SMART" id="SM01390">
    <property type="entry name" value="Ribosomal_S4"/>
    <property type="match status" value="1"/>
</dbReference>
<dbReference type="SMART" id="SM00363">
    <property type="entry name" value="S4"/>
    <property type="match status" value="1"/>
</dbReference>
<dbReference type="SUPFAM" id="SSF55174">
    <property type="entry name" value="Alpha-L RNA-binding motif"/>
    <property type="match status" value="1"/>
</dbReference>
<dbReference type="PROSITE" id="PS00632">
    <property type="entry name" value="RIBOSOMAL_S4"/>
    <property type="match status" value="1"/>
</dbReference>
<dbReference type="PROSITE" id="PS50889">
    <property type="entry name" value="S4"/>
    <property type="match status" value="1"/>
</dbReference>
<gene>
    <name evidence="1" type="primary">rpsD</name>
    <name type="ordered locus">Vapar_5046</name>
</gene>
<sequence length="207" mass="23510">MARYLGPKAKLSRREGTDLFLKSARRSIQDKAKFDSKPGQHGRTSGQRTSDYGLQLREKQKVKRMYGVLEKQFRRYFEEADRRRGNTGANLLFILESRLDNVVYRMGFGSTRAEARQLVSHKAITVNGQSVNIPSYLVKTGDVIAVRDKSKKQTRIAEALQLAQQVGIPAWVEVNADKAEGTFKKVPDRDEFAADINESLIVELYSR</sequence>
<proteinExistence type="inferred from homology"/>
<name>RS4_VARPS</name>
<feature type="chain" id="PRO_1000214313" description="Small ribosomal subunit protein uS4">
    <location>
        <begin position="1"/>
        <end position="207"/>
    </location>
</feature>
<feature type="domain" description="S4 RNA-binding" evidence="1">
    <location>
        <begin position="97"/>
        <end position="160"/>
    </location>
</feature>
<feature type="region of interest" description="Disordered" evidence="2">
    <location>
        <begin position="29"/>
        <end position="54"/>
    </location>
</feature>
<feature type="compositionally biased region" description="Basic and acidic residues" evidence="2">
    <location>
        <begin position="29"/>
        <end position="38"/>
    </location>
</feature>
<feature type="compositionally biased region" description="Polar residues" evidence="2">
    <location>
        <begin position="42"/>
        <end position="52"/>
    </location>
</feature>
<evidence type="ECO:0000255" key="1">
    <source>
        <dbReference type="HAMAP-Rule" id="MF_01306"/>
    </source>
</evidence>
<evidence type="ECO:0000256" key="2">
    <source>
        <dbReference type="SAM" id="MobiDB-lite"/>
    </source>
</evidence>
<evidence type="ECO:0000305" key="3"/>
<organism>
    <name type="scientific">Variovorax paradoxus (strain S110)</name>
    <dbReference type="NCBI Taxonomy" id="543728"/>
    <lineage>
        <taxon>Bacteria</taxon>
        <taxon>Pseudomonadati</taxon>
        <taxon>Pseudomonadota</taxon>
        <taxon>Betaproteobacteria</taxon>
        <taxon>Burkholderiales</taxon>
        <taxon>Comamonadaceae</taxon>
        <taxon>Variovorax</taxon>
    </lineage>
</organism>
<keyword id="KW-0687">Ribonucleoprotein</keyword>
<keyword id="KW-0689">Ribosomal protein</keyword>
<keyword id="KW-0694">RNA-binding</keyword>
<keyword id="KW-0699">rRNA-binding</keyword>
<accession>C5CQ76</accession>
<reference key="1">
    <citation type="journal article" date="2011" name="J. Bacteriol.">
        <title>Complete genome sequence of the metabolically versatile plant growth-promoting endophyte, Variovorax paradoxus S110.</title>
        <authorList>
            <person name="Han J.I."/>
            <person name="Choi H.K."/>
            <person name="Lee S.W."/>
            <person name="Orwin P.M."/>
            <person name="Kim J."/>
            <person name="Laroe S.L."/>
            <person name="Kim T.G."/>
            <person name="O'Neil J."/>
            <person name="Leadbetter J.R."/>
            <person name="Lee S.Y."/>
            <person name="Hur C.G."/>
            <person name="Spain J.C."/>
            <person name="Ovchinnikova G."/>
            <person name="Goodwin L."/>
            <person name="Han C."/>
        </authorList>
    </citation>
    <scope>NUCLEOTIDE SEQUENCE [LARGE SCALE GENOMIC DNA]</scope>
    <source>
        <strain>S110</strain>
    </source>
</reference>